<evidence type="ECO:0000255" key="1">
    <source>
        <dbReference type="HAMAP-Rule" id="MF_01073"/>
    </source>
</evidence>
<feature type="chain" id="PRO_1000136673" description="Macrodomain Ter protein">
    <location>
        <begin position="1"/>
        <end position="150"/>
    </location>
</feature>
<keyword id="KW-0131">Cell cycle</keyword>
<keyword id="KW-0132">Cell division</keyword>
<keyword id="KW-0963">Cytoplasm</keyword>
<keyword id="KW-0238">DNA-binding</keyword>
<gene>
    <name evidence="1" type="primary">matP</name>
    <name type="ordered locus">SeAg_B1027</name>
</gene>
<protein>
    <recommendedName>
        <fullName evidence="1">Macrodomain Ter protein</fullName>
    </recommendedName>
</protein>
<dbReference type="EMBL" id="CP001138">
    <property type="protein sequence ID" value="ACH50489.1"/>
    <property type="molecule type" value="Genomic_DNA"/>
</dbReference>
<dbReference type="RefSeq" id="WP_000877172.1">
    <property type="nucleotide sequence ID" value="NC_011149.1"/>
</dbReference>
<dbReference type="SMR" id="B5F1V3"/>
<dbReference type="KEGG" id="sea:SeAg_B1027"/>
<dbReference type="HOGENOM" id="CLU_142157_0_0_6"/>
<dbReference type="Proteomes" id="UP000008819">
    <property type="component" value="Chromosome"/>
</dbReference>
<dbReference type="GO" id="GO:0005737">
    <property type="term" value="C:cytoplasm"/>
    <property type="evidence" value="ECO:0007669"/>
    <property type="project" value="UniProtKB-SubCell"/>
</dbReference>
<dbReference type="GO" id="GO:0043565">
    <property type="term" value="F:sequence-specific DNA binding"/>
    <property type="evidence" value="ECO:0007669"/>
    <property type="project" value="UniProtKB-UniRule"/>
</dbReference>
<dbReference type="GO" id="GO:0051301">
    <property type="term" value="P:cell division"/>
    <property type="evidence" value="ECO:0007669"/>
    <property type="project" value="UniProtKB-UniRule"/>
</dbReference>
<dbReference type="GO" id="GO:0006355">
    <property type="term" value="P:regulation of DNA-templated transcription"/>
    <property type="evidence" value="ECO:0007669"/>
    <property type="project" value="InterPro"/>
</dbReference>
<dbReference type="Gene3D" id="1.20.1270.380">
    <property type="entry name" value="MatP, N-terminal domain"/>
    <property type="match status" value="1"/>
</dbReference>
<dbReference type="Gene3D" id="1.10.1220.10">
    <property type="entry name" value="Met repressor-like"/>
    <property type="match status" value="1"/>
</dbReference>
<dbReference type="HAMAP" id="MF_01073">
    <property type="entry name" value="MatP"/>
    <property type="match status" value="1"/>
</dbReference>
<dbReference type="InterPro" id="IPR013321">
    <property type="entry name" value="Arc_rbn_hlx_hlx"/>
</dbReference>
<dbReference type="InterPro" id="IPR009390">
    <property type="entry name" value="MatP"/>
</dbReference>
<dbReference type="InterPro" id="IPR035375">
    <property type="entry name" value="MatP_C"/>
</dbReference>
<dbReference type="InterPro" id="IPR035087">
    <property type="entry name" value="MatP_N"/>
</dbReference>
<dbReference type="InterPro" id="IPR038339">
    <property type="entry name" value="MatP_N_sf"/>
</dbReference>
<dbReference type="NCBIfam" id="NF003471">
    <property type="entry name" value="PRK05097.1"/>
    <property type="match status" value="1"/>
</dbReference>
<dbReference type="Pfam" id="PF06303">
    <property type="entry name" value="MatP"/>
    <property type="match status" value="1"/>
</dbReference>
<dbReference type="Pfam" id="PF17414">
    <property type="entry name" value="MatP_C"/>
    <property type="match status" value="1"/>
</dbReference>
<name>MATP_SALA4</name>
<reference key="1">
    <citation type="journal article" date="2011" name="J. Bacteriol.">
        <title>Comparative genomics of 28 Salmonella enterica isolates: evidence for CRISPR-mediated adaptive sublineage evolution.</title>
        <authorList>
            <person name="Fricke W.F."/>
            <person name="Mammel M.K."/>
            <person name="McDermott P.F."/>
            <person name="Tartera C."/>
            <person name="White D.G."/>
            <person name="Leclerc J.E."/>
            <person name="Ravel J."/>
            <person name="Cebula T.A."/>
        </authorList>
    </citation>
    <scope>NUCLEOTIDE SEQUENCE [LARGE SCALE GENOMIC DNA]</scope>
    <source>
        <strain>SL483</strain>
    </source>
</reference>
<sequence length="150" mass="17801">MKYQQLENLESGWKWKYLVKKHREGELITRYVEASAAQEAVNLLLALENEPVRVNVWIDRHMNPALLNRMKQTIRARRKRHFNAEHQHTRKKSIDLEFMVWQRLAGLAQRRGKTLSETIVQLIEDAEHKEKYATQMTTLKQDLQALLGKK</sequence>
<accession>B5F1V3</accession>
<proteinExistence type="inferred from homology"/>
<comment type="function">
    <text evidence="1">Required for spatial organization of the terminus region of the chromosome (Ter macrodomain) during the cell cycle. Prevents early segregation of duplicated Ter macrodomains during cell division. Binds specifically to matS, which is a 13 bp signature motif repeated within the Ter macrodomain.</text>
</comment>
<comment type="subunit">
    <text evidence="1">Homodimer.</text>
</comment>
<comment type="subcellular location">
    <subcellularLocation>
        <location evidence="1">Cytoplasm</location>
    </subcellularLocation>
</comment>
<comment type="similarity">
    <text evidence="1">Belongs to the MatP family.</text>
</comment>
<organism>
    <name type="scientific">Salmonella agona (strain SL483)</name>
    <dbReference type="NCBI Taxonomy" id="454166"/>
    <lineage>
        <taxon>Bacteria</taxon>
        <taxon>Pseudomonadati</taxon>
        <taxon>Pseudomonadota</taxon>
        <taxon>Gammaproteobacteria</taxon>
        <taxon>Enterobacterales</taxon>
        <taxon>Enterobacteriaceae</taxon>
        <taxon>Salmonella</taxon>
    </lineage>
</organism>